<keyword id="KW-0028">Amino-acid biosynthesis</keyword>
<keyword id="KW-0057">Aromatic amino acid biosynthesis</keyword>
<keyword id="KW-0328">Glycosyltransferase</keyword>
<keyword id="KW-0460">Magnesium</keyword>
<keyword id="KW-0479">Metal-binding</keyword>
<keyword id="KW-0808">Transferase</keyword>
<keyword id="KW-0822">Tryptophan biosynthesis</keyword>
<organism>
    <name type="scientific">Rhizobium johnstonii (strain DSM 114642 / LMG 32736 / 3841)</name>
    <name type="common">Rhizobium leguminosarum bv. viciae</name>
    <dbReference type="NCBI Taxonomy" id="216596"/>
    <lineage>
        <taxon>Bacteria</taxon>
        <taxon>Pseudomonadati</taxon>
        <taxon>Pseudomonadota</taxon>
        <taxon>Alphaproteobacteria</taxon>
        <taxon>Hyphomicrobiales</taxon>
        <taxon>Rhizobiaceae</taxon>
        <taxon>Rhizobium/Agrobacterium group</taxon>
        <taxon>Rhizobium</taxon>
        <taxon>Rhizobium johnstonii</taxon>
    </lineage>
</organism>
<reference key="1">
    <citation type="journal article" date="2006" name="Genome Biol.">
        <title>The genome of Rhizobium leguminosarum has recognizable core and accessory components.</title>
        <authorList>
            <person name="Young J.P.W."/>
            <person name="Crossman L.C."/>
            <person name="Johnston A.W.B."/>
            <person name="Thomson N.R."/>
            <person name="Ghazoui Z.F."/>
            <person name="Hull K.H."/>
            <person name="Wexler M."/>
            <person name="Curson A.R.J."/>
            <person name="Todd J.D."/>
            <person name="Poole P.S."/>
            <person name="Mauchline T.H."/>
            <person name="East A.K."/>
            <person name="Quail M.A."/>
            <person name="Churcher C."/>
            <person name="Arrowsmith C."/>
            <person name="Cherevach I."/>
            <person name="Chillingworth T."/>
            <person name="Clarke K."/>
            <person name="Cronin A."/>
            <person name="Davis P."/>
            <person name="Fraser A."/>
            <person name="Hance Z."/>
            <person name="Hauser H."/>
            <person name="Jagels K."/>
            <person name="Moule S."/>
            <person name="Mungall K."/>
            <person name="Norbertczak H."/>
            <person name="Rabbinowitsch E."/>
            <person name="Sanders M."/>
            <person name="Simmonds M."/>
            <person name="Whitehead S."/>
            <person name="Parkhill J."/>
        </authorList>
    </citation>
    <scope>NUCLEOTIDE SEQUENCE [LARGE SCALE GENOMIC DNA]</scope>
    <source>
        <strain>DSM 114642 / LMG 32736 / 3841</strain>
    </source>
</reference>
<proteinExistence type="inferred from homology"/>
<comment type="function">
    <text evidence="1">Catalyzes the transfer of the phosphoribosyl group of 5-phosphorylribose-1-pyrophosphate (PRPP) to anthranilate to yield N-(5'-phosphoribosyl)-anthranilate (PRA).</text>
</comment>
<comment type="catalytic activity">
    <reaction evidence="1">
        <text>N-(5-phospho-beta-D-ribosyl)anthranilate + diphosphate = 5-phospho-alpha-D-ribose 1-diphosphate + anthranilate</text>
        <dbReference type="Rhea" id="RHEA:11768"/>
        <dbReference type="ChEBI" id="CHEBI:16567"/>
        <dbReference type="ChEBI" id="CHEBI:18277"/>
        <dbReference type="ChEBI" id="CHEBI:33019"/>
        <dbReference type="ChEBI" id="CHEBI:58017"/>
        <dbReference type="EC" id="2.4.2.18"/>
    </reaction>
</comment>
<comment type="cofactor">
    <cofactor evidence="1">
        <name>Mg(2+)</name>
        <dbReference type="ChEBI" id="CHEBI:18420"/>
    </cofactor>
    <text evidence="1">Binds 2 magnesium ions per monomer.</text>
</comment>
<comment type="pathway">
    <text evidence="1">Amino-acid biosynthesis; L-tryptophan biosynthesis; L-tryptophan from chorismate: step 2/5.</text>
</comment>
<comment type="subunit">
    <text evidence="1">Homodimer.</text>
</comment>
<comment type="similarity">
    <text evidence="1">Belongs to the anthranilate phosphoribosyltransferase family.</text>
</comment>
<dbReference type="EC" id="2.4.2.18" evidence="1"/>
<dbReference type="EMBL" id="AM236080">
    <property type="protein sequence ID" value="CAK07981.1"/>
    <property type="molecule type" value="Genomic_DNA"/>
</dbReference>
<dbReference type="RefSeq" id="WP_011652053.1">
    <property type="nucleotide sequence ID" value="NC_008380.1"/>
</dbReference>
<dbReference type="SMR" id="Q1MGE2"/>
<dbReference type="EnsemblBacteria" id="CAK07981">
    <property type="protein sequence ID" value="CAK07981"/>
    <property type="gene ID" value="RL2493"/>
</dbReference>
<dbReference type="KEGG" id="rle:RL2493"/>
<dbReference type="eggNOG" id="COG0547">
    <property type="taxonomic scope" value="Bacteria"/>
</dbReference>
<dbReference type="HOGENOM" id="CLU_034315_2_1_5"/>
<dbReference type="UniPathway" id="UPA00035">
    <property type="reaction ID" value="UER00041"/>
</dbReference>
<dbReference type="Proteomes" id="UP000006575">
    <property type="component" value="Chromosome"/>
</dbReference>
<dbReference type="GO" id="GO:0005829">
    <property type="term" value="C:cytosol"/>
    <property type="evidence" value="ECO:0007669"/>
    <property type="project" value="TreeGrafter"/>
</dbReference>
<dbReference type="GO" id="GO:0004048">
    <property type="term" value="F:anthranilate phosphoribosyltransferase activity"/>
    <property type="evidence" value="ECO:0007669"/>
    <property type="project" value="UniProtKB-UniRule"/>
</dbReference>
<dbReference type="GO" id="GO:0000287">
    <property type="term" value="F:magnesium ion binding"/>
    <property type="evidence" value="ECO:0007669"/>
    <property type="project" value="UniProtKB-UniRule"/>
</dbReference>
<dbReference type="GO" id="GO:0000162">
    <property type="term" value="P:L-tryptophan biosynthetic process"/>
    <property type="evidence" value="ECO:0007669"/>
    <property type="project" value="UniProtKB-UniRule"/>
</dbReference>
<dbReference type="FunFam" id="3.40.1030.10:FF:000002">
    <property type="entry name" value="Anthranilate phosphoribosyltransferase"/>
    <property type="match status" value="1"/>
</dbReference>
<dbReference type="Gene3D" id="3.40.1030.10">
    <property type="entry name" value="Nucleoside phosphorylase/phosphoribosyltransferase catalytic domain"/>
    <property type="match status" value="1"/>
</dbReference>
<dbReference type="Gene3D" id="1.20.970.10">
    <property type="entry name" value="Transferase, Pyrimidine Nucleoside Phosphorylase, Chain C"/>
    <property type="match status" value="1"/>
</dbReference>
<dbReference type="HAMAP" id="MF_00211">
    <property type="entry name" value="TrpD"/>
    <property type="match status" value="1"/>
</dbReference>
<dbReference type="InterPro" id="IPR005940">
    <property type="entry name" value="Anthranilate_Pribosyl_Tfrase"/>
</dbReference>
<dbReference type="InterPro" id="IPR000312">
    <property type="entry name" value="Glycosyl_Trfase_fam3"/>
</dbReference>
<dbReference type="InterPro" id="IPR017459">
    <property type="entry name" value="Glycosyl_Trfase_fam3_N_dom"/>
</dbReference>
<dbReference type="InterPro" id="IPR036320">
    <property type="entry name" value="Glycosyl_Trfase_fam3_N_dom_sf"/>
</dbReference>
<dbReference type="InterPro" id="IPR035902">
    <property type="entry name" value="Nuc_phospho_transferase"/>
</dbReference>
<dbReference type="NCBIfam" id="TIGR01245">
    <property type="entry name" value="trpD"/>
    <property type="match status" value="1"/>
</dbReference>
<dbReference type="PANTHER" id="PTHR43285">
    <property type="entry name" value="ANTHRANILATE PHOSPHORIBOSYLTRANSFERASE"/>
    <property type="match status" value="1"/>
</dbReference>
<dbReference type="PANTHER" id="PTHR43285:SF2">
    <property type="entry name" value="ANTHRANILATE PHOSPHORIBOSYLTRANSFERASE"/>
    <property type="match status" value="1"/>
</dbReference>
<dbReference type="Pfam" id="PF02885">
    <property type="entry name" value="Glycos_trans_3N"/>
    <property type="match status" value="1"/>
</dbReference>
<dbReference type="Pfam" id="PF00591">
    <property type="entry name" value="Glycos_transf_3"/>
    <property type="match status" value="1"/>
</dbReference>
<dbReference type="SUPFAM" id="SSF52418">
    <property type="entry name" value="Nucleoside phosphorylase/phosphoribosyltransferase catalytic domain"/>
    <property type="match status" value="1"/>
</dbReference>
<dbReference type="SUPFAM" id="SSF47648">
    <property type="entry name" value="Nucleoside phosphorylase/phosphoribosyltransferase N-terminal domain"/>
    <property type="match status" value="1"/>
</dbReference>
<accession>Q1MGE2</accession>
<sequence length="338" mass="34822">MTDLKPFLAKAASREPLTREEARSAFDILMSGQATPSQIGGFLMALRVRGETVDEIVGAVASMRSKMLTVEAPADAIDIVGTGGDASGTYNISTLAALIVAGAGVPVAKHGNRALSSKSGAADNLAALGVKLDVGPEIISRCIAEAGVGFMFAQMHHSAMRHVGPSRVELGTRTIFNLLGPLSNPAGVRRQLLGVFSPQWLVPLAEVMRDLGSECVWVVHGDGLDEITTTGITKVAALEDGKIRTFELSPADFGVSPCVLADIKGGDGVANAAALREVLGGAKNAYRDVSLANAAASLVIAGKVETIHDGMTLAAQSLDSGATALALDKLIAVSNDID</sequence>
<name>TRPD_RHIJ3</name>
<feature type="chain" id="PRO_1000043055" description="Anthranilate phosphoribosyltransferase">
    <location>
        <begin position="1"/>
        <end position="338"/>
    </location>
</feature>
<feature type="binding site" evidence="1">
    <location>
        <position position="81"/>
    </location>
    <ligand>
        <name>5-phospho-alpha-D-ribose 1-diphosphate</name>
        <dbReference type="ChEBI" id="CHEBI:58017"/>
    </ligand>
</feature>
<feature type="binding site" evidence="1">
    <location>
        <position position="81"/>
    </location>
    <ligand>
        <name>anthranilate</name>
        <dbReference type="ChEBI" id="CHEBI:16567"/>
        <label>1</label>
    </ligand>
</feature>
<feature type="binding site" evidence="1">
    <location>
        <begin position="84"/>
        <end position="85"/>
    </location>
    <ligand>
        <name>5-phospho-alpha-D-ribose 1-diphosphate</name>
        <dbReference type="ChEBI" id="CHEBI:58017"/>
    </ligand>
</feature>
<feature type="binding site" evidence="1">
    <location>
        <position position="89"/>
    </location>
    <ligand>
        <name>5-phospho-alpha-D-ribose 1-diphosphate</name>
        <dbReference type="ChEBI" id="CHEBI:58017"/>
    </ligand>
</feature>
<feature type="binding site" evidence="1">
    <location>
        <begin position="91"/>
        <end position="94"/>
    </location>
    <ligand>
        <name>5-phospho-alpha-D-ribose 1-diphosphate</name>
        <dbReference type="ChEBI" id="CHEBI:58017"/>
    </ligand>
</feature>
<feature type="binding site" evidence="1">
    <location>
        <position position="93"/>
    </location>
    <ligand>
        <name>Mg(2+)</name>
        <dbReference type="ChEBI" id="CHEBI:18420"/>
        <label>1</label>
    </ligand>
</feature>
<feature type="binding site" evidence="1">
    <location>
        <begin position="109"/>
        <end position="117"/>
    </location>
    <ligand>
        <name>5-phospho-alpha-D-ribose 1-diphosphate</name>
        <dbReference type="ChEBI" id="CHEBI:58017"/>
    </ligand>
</feature>
<feature type="binding site" evidence="1">
    <location>
        <position position="112"/>
    </location>
    <ligand>
        <name>anthranilate</name>
        <dbReference type="ChEBI" id="CHEBI:16567"/>
        <label>1</label>
    </ligand>
</feature>
<feature type="binding site" evidence="1">
    <location>
        <position position="121"/>
    </location>
    <ligand>
        <name>5-phospho-alpha-D-ribose 1-diphosphate</name>
        <dbReference type="ChEBI" id="CHEBI:58017"/>
    </ligand>
</feature>
<feature type="binding site" evidence="1">
    <location>
        <position position="167"/>
    </location>
    <ligand>
        <name>anthranilate</name>
        <dbReference type="ChEBI" id="CHEBI:16567"/>
        <label>2</label>
    </ligand>
</feature>
<feature type="binding site" evidence="1">
    <location>
        <position position="225"/>
    </location>
    <ligand>
        <name>Mg(2+)</name>
        <dbReference type="ChEBI" id="CHEBI:18420"/>
        <label>2</label>
    </ligand>
</feature>
<feature type="binding site" evidence="1">
    <location>
        <position position="226"/>
    </location>
    <ligand>
        <name>Mg(2+)</name>
        <dbReference type="ChEBI" id="CHEBI:18420"/>
        <label>1</label>
    </ligand>
</feature>
<feature type="binding site" evidence="1">
    <location>
        <position position="226"/>
    </location>
    <ligand>
        <name>Mg(2+)</name>
        <dbReference type="ChEBI" id="CHEBI:18420"/>
        <label>2</label>
    </ligand>
</feature>
<gene>
    <name evidence="1" type="primary">trpD</name>
    <name type="ordered locus">RL2493</name>
</gene>
<evidence type="ECO:0000255" key="1">
    <source>
        <dbReference type="HAMAP-Rule" id="MF_00211"/>
    </source>
</evidence>
<protein>
    <recommendedName>
        <fullName evidence="1">Anthranilate phosphoribosyltransferase</fullName>
        <ecNumber evidence="1">2.4.2.18</ecNumber>
    </recommendedName>
</protein>